<proteinExistence type="inferred from homology"/>
<reference key="1">
    <citation type="journal article" date="2003" name="Nucleic Acids Res.">
        <title>Genome sequence of Chlamydophila caviae (Chlamydia psittaci GPIC): examining the role of niche-specific genes in the evolution of the Chlamydiaceae.</title>
        <authorList>
            <person name="Read T.D."/>
            <person name="Myers G.S.A."/>
            <person name="Brunham R.C."/>
            <person name="Nelson W.C."/>
            <person name="Paulsen I.T."/>
            <person name="Heidelberg J.F."/>
            <person name="Holtzapple E.K."/>
            <person name="Khouri H.M."/>
            <person name="Federova N.B."/>
            <person name="Carty H.A."/>
            <person name="Umayam L.A."/>
            <person name="Haft D.H."/>
            <person name="Peterson J.D."/>
            <person name="Beanan M.J."/>
            <person name="White O."/>
            <person name="Salzberg S.L."/>
            <person name="Hsia R.-C."/>
            <person name="McClarty G."/>
            <person name="Rank R.G."/>
            <person name="Bavoil P.M."/>
            <person name="Fraser C.M."/>
        </authorList>
    </citation>
    <scope>NUCLEOTIDE SEQUENCE [LARGE SCALE GENOMIC DNA]</scope>
    <source>
        <strain>ATCC VR-813 / DSM 19441 / 03DC25 / GPIC</strain>
    </source>
</reference>
<evidence type="ECO:0000255" key="1">
    <source>
        <dbReference type="HAMAP-Rule" id="MF_00508"/>
    </source>
</evidence>
<evidence type="ECO:0000305" key="2"/>
<protein>
    <recommendedName>
        <fullName evidence="1">Small ribosomal subunit protein uS10</fullName>
    </recommendedName>
    <alternativeName>
        <fullName evidence="2">30S ribosomal protein S10</fullName>
    </alternativeName>
</protein>
<accession>Q824F9</accession>
<keyword id="KW-0687">Ribonucleoprotein</keyword>
<keyword id="KW-0689">Ribosomal protein</keyword>
<gene>
    <name evidence="1" type="primary">rpsJ</name>
    <name type="ordered locus">CCA_00193</name>
</gene>
<feature type="chain" id="PRO_0000146515" description="Small ribosomal subunit protein uS10">
    <location>
        <begin position="1"/>
        <end position="105"/>
    </location>
</feature>
<dbReference type="EMBL" id="AE015925">
    <property type="protein sequence ID" value="AAP04944.1"/>
    <property type="molecule type" value="Genomic_DNA"/>
</dbReference>
<dbReference type="RefSeq" id="WP_006342871.1">
    <property type="nucleotide sequence ID" value="NC_003361.3"/>
</dbReference>
<dbReference type="SMR" id="Q824F9"/>
<dbReference type="STRING" id="227941.CCA_00193"/>
<dbReference type="GeneID" id="93024745"/>
<dbReference type="KEGG" id="cca:CCA_00193"/>
<dbReference type="eggNOG" id="COG0051">
    <property type="taxonomic scope" value="Bacteria"/>
</dbReference>
<dbReference type="HOGENOM" id="CLU_122625_1_3_0"/>
<dbReference type="OrthoDB" id="9804464at2"/>
<dbReference type="Proteomes" id="UP000002193">
    <property type="component" value="Chromosome"/>
</dbReference>
<dbReference type="GO" id="GO:1990904">
    <property type="term" value="C:ribonucleoprotein complex"/>
    <property type="evidence" value="ECO:0007669"/>
    <property type="project" value="UniProtKB-KW"/>
</dbReference>
<dbReference type="GO" id="GO:0005840">
    <property type="term" value="C:ribosome"/>
    <property type="evidence" value="ECO:0007669"/>
    <property type="project" value="UniProtKB-KW"/>
</dbReference>
<dbReference type="GO" id="GO:0003735">
    <property type="term" value="F:structural constituent of ribosome"/>
    <property type="evidence" value="ECO:0007669"/>
    <property type="project" value="InterPro"/>
</dbReference>
<dbReference type="GO" id="GO:0000049">
    <property type="term" value="F:tRNA binding"/>
    <property type="evidence" value="ECO:0007669"/>
    <property type="project" value="UniProtKB-UniRule"/>
</dbReference>
<dbReference type="GO" id="GO:0006412">
    <property type="term" value="P:translation"/>
    <property type="evidence" value="ECO:0007669"/>
    <property type="project" value="UniProtKB-UniRule"/>
</dbReference>
<dbReference type="FunFam" id="3.30.70.600:FF:000001">
    <property type="entry name" value="30S ribosomal protein S10"/>
    <property type="match status" value="1"/>
</dbReference>
<dbReference type="Gene3D" id="3.30.70.600">
    <property type="entry name" value="Ribosomal protein S10 domain"/>
    <property type="match status" value="1"/>
</dbReference>
<dbReference type="HAMAP" id="MF_00508">
    <property type="entry name" value="Ribosomal_uS10"/>
    <property type="match status" value="1"/>
</dbReference>
<dbReference type="InterPro" id="IPR001848">
    <property type="entry name" value="Ribosomal_uS10"/>
</dbReference>
<dbReference type="InterPro" id="IPR018268">
    <property type="entry name" value="Ribosomal_uS10_CS"/>
</dbReference>
<dbReference type="InterPro" id="IPR027486">
    <property type="entry name" value="Ribosomal_uS10_dom"/>
</dbReference>
<dbReference type="InterPro" id="IPR036838">
    <property type="entry name" value="Ribosomal_uS10_dom_sf"/>
</dbReference>
<dbReference type="NCBIfam" id="NF001861">
    <property type="entry name" value="PRK00596.1"/>
    <property type="match status" value="1"/>
</dbReference>
<dbReference type="NCBIfam" id="TIGR01049">
    <property type="entry name" value="rpsJ_bact"/>
    <property type="match status" value="1"/>
</dbReference>
<dbReference type="PANTHER" id="PTHR11700">
    <property type="entry name" value="30S RIBOSOMAL PROTEIN S10 FAMILY MEMBER"/>
    <property type="match status" value="1"/>
</dbReference>
<dbReference type="Pfam" id="PF00338">
    <property type="entry name" value="Ribosomal_S10"/>
    <property type="match status" value="1"/>
</dbReference>
<dbReference type="PRINTS" id="PR00971">
    <property type="entry name" value="RIBOSOMALS10"/>
</dbReference>
<dbReference type="SMART" id="SM01403">
    <property type="entry name" value="Ribosomal_S10"/>
    <property type="match status" value="1"/>
</dbReference>
<dbReference type="SUPFAM" id="SSF54999">
    <property type="entry name" value="Ribosomal protein S10"/>
    <property type="match status" value="1"/>
</dbReference>
<dbReference type="PROSITE" id="PS00361">
    <property type="entry name" value="RIBOSOMAL_S10"/>
    <property type="match status" value="1"/>
</dbReference>
<comment type="function">
    <text evidence="1">Involved in the binding of tRNA to the ribosomes.</text>
</comment>
<comment type="subunit">
    <text evidence="1">Part of the 30S ribosomal subunit.</text>
</comment>
<comment type="similarity">
    <text evidence="1">Belongs to the universal ribosomal protein uS10 family.</text>
</comment>
<name>RS10_CHLCV</name>
<organism>
    <name type="scientific">Chlamydia caviae (strain ATCC VR-813 / DSM 19441 / 03DC25 / GPIC)</name>
    <name type="common">Chlamydophila caviae</name>
    <dbReference type="NCBI Taxonomy" id="227941"/>
    <lineage>
        <taxon>Bacteria</taxon>
        <taxon>Pseudomonadati</taxon>
        <taxon>Chlamydiota</taxon>
        <taxon>Chlamydiia</taxon>
        <taxon>Chlamydiales</taxon>
        <taxon>Chlamydiaceae</taxon>
        <taxon>Chlamydia/Chlamydophila group</taxon>
        <taxon>Chlamydia</taxon>
    </lineage>
</organism>
<sequence length="105" mass="11826">MKQQKQKIRIRLKGFDQGQLDRSTADIVETAKRTGARVAGPIPLPTKREVYTVLRSPHVDKKSREQFEIRTHKRLIDILDPTGKTIDALKMLALPAGVDIKIKAA</sequence>